<accession>Q8GV43</accession>
<gene>
    <name type="primary">PLC6</name>
    <name type="synonym">PLC8</name>
    <name type="ordered locus">At2g40116</name>
    <name type="ORF">F27I1</name>
</gene>
<protein>
    <recommendedName>
        <fullName>Phosphoinositide phospholipase C 6</fullName>
        <ecNumber>3.1.4.11</ecNumber>
    </recommendedName>
    <alternativeName>
        <fullName>Phosphoinositide phospholipase PLC6</fullName>
        <shortName>AtPLC6</shortName>
        <shortName>AtPLC8</shortName>
        <shortName>PI-PLC6</shortName>
    </alternativeName>
</protein>
<name>PLCD6_ARATH</name>
<feature type="chain" id="PRO_0000324131" description="Phosphoinositide phospholipase C 6">
    <location>
        <begin position="1"/>
        <end position="613"/>
    </location>
</feature>
<feature type="domain" description="PI-PLC X-box" evidence="3">
    <location>
        <begin position="137"/>
        <end position="281"/>
    </location>
</feature>
<feature type="domain" description="PI-PLC Y-box" evidence="4">
    <location>
        <begin position="349"/>
        <end position="465"/>
    </location>
</feature>
<feature type="domain" description="C2" evidence="2">
    <location>
        <begin position="466"/>
        <end position="595"/>
    </location>
</feature>
<feature type="region of interest" description="Disordered" evidence="5">
    <location>
        <begin position="288"/>
        <end position="349"/>
    </location>
</feature>
<feature type="active site" evidence="3">
    <location>
        <position position="152"/>
    </location>
</feature>
<feature type="active site" evidence="3">
    <location>
        <position position="198"/>
    </location>
</feature>
<proteinExistence type="evidence at transcript level"/>
<dbReference type="EC" id="3.1.4.11"/>
<dbReference type="EMBL" id="CP002685">
    <property type="protein sequence ID" value="AEC09783.1"/>
    <property type="molecule type" value="Genomic_DNA"/>
</dbReference>
<dbReference type="EMBL" id="BX819512">
    <property type="status" value="NOT_ANNOTATED_CDS"/>
    <property type="molecule type" value="mRNA"/>
</dbReference>
<dbReference type="EMBL" id="AY150803">
    <property type="protein sequence ID" value="AAN75042.1"/>
    <property type="molecule type" value="Genomic_DNA"/>
</dbReference>
<dbReference type="RefSeq" id="NP_850327.2">
    <property type="nucleotide sequence ID" value="NM_179996.3"/>
</dbReference>
<dbReference type="SMR" id="Q8GV43"/>
<dbReference type="FunCoup" id="Q8GV43">
    <property type="interactions" value="837"/>
</dbReference>
<dbReference type="STRING" id="3702.Q8GV43"/>
<dbReference type="PaxDb" id="3702-AT2G40116.1"/>
<dbReference type="ProteomicsDB" id="234672"/>
<dbReference type="EnsemblPlants" id="AT2G40116.1">
    <property type="protein sequence ID" value="AT2G40116.1"/>
    <property type="gene ID" value="AT2G40116"/>
</dbReference>
<dbReference type="GeneID" id="818602"/>
<dbReference type="Gramene" id="AT2G40116.1">
    <property type="protein sequence ID" value="AT2G40116.1"/>
    <property type="gene ID" value="AT2G40116"/>
</dbReference>
<dbReference type="KEGG" id="ath:AT2G40116"/>
<dbReference type="Araport" id="AT2G40116"/>
<dbReference type="TAIR" id="AT2G40116"/>
<dbReference type="eggNOG" id="KOG0169">
    <property type="taxonomic scope" value="Eukaryota"/>
</dbReference>
<dbReference type="HOGENOM" id="CLU_002738_3_2_1"/>
<dbReference type="InParanoid" id="Q8GV43"/>
<dbReference type="OMA" id="LDDHHVH"/>
<dbReference type="PhylomeDB" id="Q8GV43"/>
<dbReference type="BioCyc" id="ARA:AT2G40116-MONOMER"/>
<dbReference type="BRENDA" id="3.1.4.11">
    <property type="organism ID" value="399"/>
</dbReference>
<dbReference type="PRO" id="PR:Q8GV43"/>
<dbReference type="Proteomes" id="UP000006548">
    <property type="component" value="Chromosome 2"/>
</dbReference>
<dbReference type="ExpressionAtlas" id="Q8GV43">
    <property type="expression patterns" value="baseline and differential"/>
</dbReference>
<dbReference type="GO" id="GO:0005886">
    <property type="term" value="C:plasma membrane"/>
    <property type="evidence" value="ECO:0007669"/>
    <property type="project" value="UniProtKB-SubCell"/>
</dbReference>
<dbReference type="GO" id="GO:0004435">
    <property type="term" value="F:phosphatidylinositol-4,5-bisphosphate phospholipase C activity"/>
    <property type="evidence" value="ECO:0007669"/>
    <property type="project" value="UniProtKB-EC"/>
</dbReference>
<dbReference type="GO" id="GO:0035556">
    <property type="term" value="P:intracellular signal transduction"/>
    <property type="evidence" value="ECO:0007669"/>
    <property type="project" value="InterPro"/>
</dbReference>
<dbReference type="GO" id="GO:0016042">
    <property type="term" value="P:lipid catabolic process"/>
    <property type="evidence" value="ECO:0007669"/>
    <property type="project" value="UniProtKB-KW"/>
</dbReference>
<dbReference type="CDD" id="cd00275">
    <property type="entry name" value="C2_PLC_like"/>
    <property type="match status" value="1"/>
</dbReference>
<dbReference type="CDD" id="cd08599">
    <property type="entry name" value="PI-PLCc_plant"/>
    <property type="match status" value="1"/>
</dbReference>
<dbReference type="FunFam" id="2.60.40.150:FF:000060">
    <property type="entry name" value="Phosphoinositide phospholipase C"/>
    <property type="match status" value="1"/>
</dbReference>
<dbReference type="Gene3D" id="2.60.40.150">
    <property type="entry name" value="C2 domain"/>
    <property type="match status" value="1"/>
</dbReference>
<dbReference type="Gene3D" id="3.20.20.190">
    <property type="entry name" value="Phosphatidylinositol (PI) phosphodiesterase"/>
    <property type="match status" value="1"/>
</dbReference>
<dbReference type="InterPro" id="IPR000008">
    <property type="entry name" value="C2_dom"/>
</dbReference>
<dbReference type="InterPro" id="IPR035892">
    <property type="entry name" value="C2_domain_sf"/>
</dbReference>
<dbReference type="InterPro" id="IPR011992">
    <property type="entry name" value="EF-hand-dom_pair"/>
</dbReference>
<dbReference type="InterPro" id="IPR001192">
    <property type="entry name" value="PI-PLC_fam"/>
</dbReference>
<dbReference type="InterPro" id="IPR017946">
    <property type="entry name" value="PLC-like_Pdiesterase_TIM-brl"/>
</dbReference>
<dbReference type="InterPro" id="IPR000909">
    <property type="entry name" value="PLipase_C_PInositol-sp_X_dom"/>
</dbReference>
<dbReference type="InterPro" id="IPR001711">
    <property type="entry name" value="PLipase_C_Pinositol-sp_Y"/>
</dbReference>
<dbReference type="PANTHER" id="PTHR10336:SF101">
    <property type="entry name" value="PHOSPHOINOSITIDE PHOSPHOLIPASE C 6"/>
    <property type="match status" value="1"/>
</dbReference>
<dbReference type="PANTHER" id="PTHR10336">
    <property type="entry name" value="PHOSPHOINOSITIDE-SPECIFIC PHOSPHOLIPASE C FAMILY PROTEIN"/>
    <property type="match status" value="1"/>
</dbReference>
<dbReference type="Pfam" id="PF00168">
    <property type="entry name" value="C2"/>
    <property type="match status" value="1"/>
</dbReference>
<dbReference type="Pfam" id="PF00388">
    <property type="entry name" value="PI-PLC-X"/>
    <property type="match status" value="1"/>
</dbReference>
<dbReference type="Pfam" id="PF00387">
    <property type="entry name" value="PI-PLC-Y"/>
    <property type="match status" value="1"/>
</dbReference>
<dbReference type="PRINTS" id="PR00390">
    <property type="entry name" value="PHPHLIPASEC"/>
</dbReference>
<dbReference type="SMART" id="SM00239">
    <property type="entry name" value="C2"/>
    <property type="match status" value="1"/>
</dbReference>
<dbReference type="SMART" id="SM00148">
    <property type="entry name" value="PLCXc"/>
    <property type="match status" value="1"/>
</dbReference>
<dbReference type="SMART" id="SM00149">
    <property type="entry name" value="PLCYc"/>
    <property type="match status" value="1"/>
</dbReference>
<dbReference type="SUPFAM" id="SSF49562">
    <property type="entry name" value="C2 domain (Calcium/lipid-binding domain, CaLB)"/>
    <property type="match status" value="1"/>
</dbReference>
<dbReference type="SUPFAM" id="SSF47473">
    <property type="entry name" value="EF-hand"/>
    <property type="match status" value="1"/>
</dbReference>
<dbReference type="SUPFAM" id="SSF51695">
    <property type="entry name" value="PLC-like phosphodiesterases"/>
    <property type="match status" value="1"/>
</dbReference>
<dbReference type="PROSITE" id="PS50004">
    <property type="entry name" value="C2"/>
    <property type="match status" value="1"/>
</dbReference>
<dbReference type="PROSITE" id="PS50007">
    <property type="entry name" value="PIPLC_X_DOMAIN"/>
    <property type="match status" value="1"/>
</dbReference>
<dbReference type="PROSITE" id="PS50008">
    <property type="entry name" value="PIPLC_Y_DOMAIN"/>
    <property type="match status" value="1"/>
</dbReference>
<keyword id="KW-1003">Cell membrane</keyword>
<keyword id="KW-0378">Hydrolase</keyword>
<keyword id="KW-0442">Lipid degradation</keyword>
<keyword id="KW-0443">Lipid metabolism</keyword>
<keyword id="KW-0472">Membrane</keyword>
<keyword id="KW-1185">Reference proteome</keyword>
<keyword id="KW-0807">Transducer</keyword>
<evidence type="ECO:0000250" key="1"/>
<evidence type="ECO:0000255" key="2">
    <source>
        <dbReference type="PROSITE-ProRule" id="PRU00041"/>
    </source>
</evidence>
<evidence type="ECO:0000255" key="3">
    <source>
        <dbReference type="PROSITE-ProRule" id="PRU00270"/>
    </source>
</evidence>
<evidence type="ECO:0000255" key="4">
    <source>
        <dbReference type="PROSITE-ProRule" id="PRU00271"/>
    </source>
</evidence>
<evidence type="ECO:0000256" key="5">
    <source>
        <dbReference type="SAM" id="MobiDB-lite"/>
    </source>
</evidence>
<evidence type="ECO:0000269" key="6">
    <source ref="6"/>
</evidence>
<reference key="1">
    <citation type="journal article" date="1999" name="Nature">
        <title>Sequence and analysis of chromosome 2 of the plant Arabidopsis thaliana.</title>
        <authorList>
            <person name="Lin X."/>
            <person name="Kaul S."/>
            <person name="Rounsley S.D."/>
            <person name="Shea T.P."/>
            <person name="Benito M.-I."/>
            <person name="Town C.D."/>
            <person name="Fujii C.Y."/>
            <person name="Mason T.M."/>
            <person name="Bowman C.L."/>
            <person name="Barnstead M.E."/>
            <person name="Feldblyum T.V."/>
            <person name="Buell C.R."/>
            <person name="Ketchum K.A."/>
            <person name="Lee J.J."/>
            <person name="Ronning C.M."/>
            <person name="Koo H.L."/>
            <person name="Moffat K.S."/>
            <person name="Cronin L.A."/>
            <person name="Shen M."/>
            <person name="Pai G."/>
            <person name="Van Aken S."/>
            <person name="Umayam L."/>
            <person name="Tallon L.J."/>
            <person name="Gill J.E."/>
            <person name="Adams M.D."/>
            <person name="Carrera A.J."/>
            <person name="Creasy T.H."/>
            <person name="Goodman H.M."/>
            <person name="Somerville C.R."/>
            <person name="Copenhaver G.P."/>
            <person name="Preuss D."/>
            <person name="Nierman W.C."/>
            <person name="White O."/>
            <person name="Eisen J.A."/>
            <person name="Salzberg S.L."/>
            <person name="Fraser C.M."/>
            <person name="Venter J.C."/>
        </authorList>
    </citation>
    <scope>NUCLEOTIDE SEQUENCE [LARGE SCALE GENOMIC DNA]</scope>
    <source>
        <strain>cv. Columbia</strain>
    </source>
</reference>
<reference key="2">
    <citation type="journal article" date="2017" name="Plant J.">
        <title>Araport11: a complete reannotation of the Arabidopsis thaliana reference genome.</title>
        <authorList>
            <person name="Cheng C.Y."/>
            <person name="Krishnakumar V."/>
            <person name="Chan A.P."/>
            <person name="Thibaud-Nissen F."/>
            <person name="Schobel S."/>
            <person name="Town C.D."/>
        </authorList>
    </citation>
    <scope>GENOME REANNOTATION</scope>
    <source>
        <strain>cv. Columbia</strain>
    </source>
</reference>
<reference key="3">
    <citation type="journal article" date="2004" name="Genome Res.">
        <title>Whole genome sequence comparisons and 'full-length' cDNA sequences: a combined approach to evaluate and improve Arabidopsis genome annotation.</title>
        <authorList>
            <person name="Castelli V."/>
            <person name="Aury J.-M."/>
            <person name="Jaillon O."/>
            <person name="Wincker P."/>
            <person name="Clepet C."/>
            <person name="Menard M."/>
            <person name="Cruaud C."/>
            <person name="Quetier F."/>
            <person name="Scarpelli C."/>
            <person name="Schaechter V."/>
            <person name="Temple G."/>
            <person name="Caboche M."/>
            <person name="Weissenbach J."/>
            <person name="Salanoubat M."/>
        </authorList>
    </citation>
    <scope>NUCLEOTIDE SEQUENCE [LARGE SCALE MRNA]</scope>
    <source>
        <strain>cv. Columbia</strain>
    </source>
</reference>
<reference key="4">
    <citation type="submission" date="2002-09" db="EMBL/GenBank/DDBJ databases">
        <title>Arabidopsis thaliana phosphoinositide-specific phospholipase C 8 (AtPLC8).</title>
        <authorList>
            <person name="Tasma I.M."/>
            <person name="Brendel V."/>
            <person name="Bhattacharyya M.K."/>
        </authorList>
    </citation>
    <scope>NUCLEOTIDE SEQUENCE [GENOMIC DNA] OF 70-613</scope>
</reference>
<reference key="5">
    <citation type="journal article" date="2002" name="Plant Physiol.">
        <title>Inositol phospholipid metabolism in Arabidopsis. Characterized and putative isoforms of inositol phospholipid kinase and phosphoinositide-specific phospholipase C.</title>
        <authorList>
            <person name="Mueller-Roeber B."/>
            <person name="Pical C."/>
        </authorList>
    </citation>
    <scope>GENE FAMILY</scope>
    <scope>NOMENCLATURE</scope>
</reference>
<reference key="6">
    <citation type="journal article" date="2004" name="New Phytol.">
        <title>Gene-specific expression and calcium activation of Arabidopsis thaliana phospholipase C isoforms.</title>
        <authorList>
            <person name="Hunt L."/>
            <person name="Otterhag L."/>
            <person name="Lee J.C."/>
            <person name="Lasheen T."/>
            <person name="Hunt J."/>
            <person name="Seki M."/>
            <person name="Shinozaki K."/>
            <person name="Sommarin M."/>
            <person name="Gilmour D.J."/>
            <person name="Pical C."/>
            <person name="Gray J.E."/>
        </authorList>
        <dbReference type="AGRICOLA" id="IND43668249"/>
    </citation>
    <scope>TISSUE SPECIFICITY</scope>
</reference>
<comment type="function">
    <text evidence="1">The production of the second messenger molecules diacylglycerol (DAG) and inositol 1,4,5-trisphosphate (IP3) is mediated by activated phosphatidylinositol-specific phospholipase C enzymes.</text>
</comment>
<comment type="catalytic activity">
    <reaction>
        <text>a 1,2-diacyl-sn-glycero-3-phospho-(1D-myo-inositol-4,5-bisphosphate) + H2O = 1D-myo-inositol 1,4,5-trisphosphate + a 1,2-diacyl-sn-glycerol + H(+)</text>
        <dbReference type="Rhea" id="RHEA:33179"/>
        <dbReference type="ChEBI" id="CHEBI:15377"/>
        <dbReference type="ChEBI" id="CHEBI:15378"/>
        <dbReference type="ChEBI" id="CHEBI:17815"/>
        <dbReference type="ChEBI" id="CHEBI:58456"/>
        <dbReference type="ChEBI" id="CHEBI:203600"/>
        <dbReference type="EC" id="3.1.4.11"/>
    </reaction>
</comment>
<comment type="cofactor">
    <cofactor>
        <name>Ca(2+)</name>
        <dbReference type="ChEBI" id="CHEBI:29108"/>
    </cofactor>
</comment>
<comment type="subcellular location">
    <subcellularLocation>
        <location evidence="1">Cell membrane</location>
        <topology evidence="1">Peripheral membrane protein</topology>
    </subcellularLocation>
</comment>
<comment type="tissue specificity">
    <text evidence="6">Expressed in leaves, flowers and siliques, but not in roots.</text>
</comment>
<organism>
    <name type="scientific">Arabidopsis thaliana</name>
    <name type="common">Mouse-ear cress</name>
    <dbReference type="NCBI Taxonomy" id="3702"/>
    <lineage>
        <taxon>Eukaryota</taxon>
        <taxon>Viridiplantae</taxon>
        <taxon>Streptophyta</taxon>
        <taxon>Embryophyta</taxon>
        <taxon>Tracheophyta</taxon>
        <taxon>Spermatophyta</taxon>
        <taxon>Magnoliopsida</taxon>
        <taxon>eudicotyledons</taxon>
        <taxon>Gunneridae</taxon>
        <taxon>Pentapetalae</taxon>
        <taxon>rosids</taxon>
        <taxon>malvids</taxon>
        <taxon>Brassicales</taxon>
        <taxon>Brassicaceae</taxon>
        <taxon>Camelineae</taxon>
        <taxon>Arabidopsis</taxon>
    </lineage>
</organism>
<sequence>MGKEKKTESYNNDSGSYNYRMFKFYNRKFKINEVTPTDDVRDAFCQFAVGGGGGGTDGDSSDGDGSTGVMGAEQLCSFLDDHGESTTVAEAQRLIDEVIRRRHHVTRFTRHGLDLDDFFNFLFYDDLNPPITPHVHQDMTAPLSHYFIYTGHNSYLTGNQLSSDCSEVPVIKALQRGVRVIELDLWPNSTGTDINVLHGRTLTTPVPLMKCLKSIRDYAFSSSPYPVIITLEDHLTPDLQAKVAEMATQIFGQMLYYPESDSLLEFPSPASLLHRIIISTKPPKEYLESRNPIVKQKDNNVSPSSEDETPRTEEIQTLESMLFDQDFESKSDSDQEDEEASEDQKPAYKRLITIHAGKPKGTVKEEMKVVVDKVRRLSLSEQELDRTCSSNSQDVVRFTQRNLLRIYPKGTRFNSSNYKPLIGWTHGAQMIAFNMQGYGKSLWLMHGMFRANGGCGYVKKPNFLMKKGFHDEVFDPRKKLPVKETLKVKVYMGDGWRMDFSHTHFDAYSPPDFYTKMFIVGVPADNAKKKTKIIEDNWYPIWDEEFSFPLTVPELALLRIEVREYDMSEKDDFGGQTCLPVAELRPGIRSVPLYDKKGEKMKSVRLLMRFIFE</sequence>